<feature type="chain" id="PRO_0000267858" description="Large ribosomal subunit protein bL17">
    <location>
        <begin position="1"/>
        <end position="113"/>
    </location>
</feature>
<dbReference type="EMBL" id="CP000246">
    <property type="protein sequence ID" value="ABG83778.1"/>
    <property type="molecule type" value="Genomic_DNA"/>
</dbReference>
<dbReference type="RefSeq" id="WP_003454231.1">
    <property type="nucleotide sequence ID" value="NC_008261.1"/>
</dbReference>
<dbReference type="SMR" id="Q0TMS6"/>
<dbReference type="STRING" id="195103.CPF_2684"/>
<dbReference type="PaxDb" id="195103-CPF_2684"/>
<dbReference type="GeneID" id="93001039"/>
<dbReference type="KEGG" id="cpf:CPF_2684"/>
<dbReference type="eggNOG" id="COG0203">
    <property type="taxonomic scope" value="Bacteria"/>
</dbReference>
<dbReference type="HOGENOM" id="CLU_074407_2_2_9"/>
<dbReference type="Proteomes" id="UP000001823">
    <property type="component" value="Chromosome"/>
</dbReference>
<dbReference type="GO" id="GO:0022625">
    <property type="term" value="C:cytosolic large ribosomal subunit"/>
    <property type="evidence" value="ECO:0007669"/>
    <property type="project" value="TreeGrafter"/>
</dbReference>
<dbReference type="GO" id="GO:0003735">
    <property type="term" value="F:structural constituent of ribosome"/>
    <property type="evidence" value="ECO:0007669"/>
    <property type="project" value="InterPro"/>
</dbReference>
<dbReference type="GO" id="GO:0006412">
    <property type="term" value="P:translation"/>
    <property type="evidence" value="ECO:0007669"/>
    <property type="project" value="UniProtKB-UniRule"/>
</dbReference>
<dbReference type="FunFam" id="3.90.1030.10:FF:000002">
    <property type="entry name" value="50S ribosomal protein L17"/>
    <property type="match status" value="1"/>
</dbReference>
<dbReference type="Gene3D" id="3.90.1030.10">
    <property type="entry name" value="Ribosomal protein L17"/>
    <property type="match status" value="1"/>
</dbReference>
<dbReference type="HAMAP" id="MF_01368">
    <property type="entry name" value="Ribosomal_bL17"/>
    <property type="match status" value="1"/>
</dbReference>
<dbReference type="InterPro" id="IPR000456">
    <property type="entry name" value="Ribosomal_bL17"/>
</dbReference>
<dbReference type="InterPro" id="IPR047859">
    <property type="entry name" value="Ribosomal_bL17_CS"/>
</dbReference>
<dbReference type="InterPro" id="IPR036373">
    <property type="entry name" value="Ribosomal_bL17_sf"/>
</dbReference>
<dbReference type="NCBIfam" id="TIGR00059">
    <property type="entry name" value="L17"/>
    <property type="match status" value="1"/>
</dbReference>
<dbReference type="PANTHER" id="PTHR14413:SF16">
    <property type="entry name" value="LARGE RIBOSOMAL SUBUNIT PROTEIN BL17M"/>
    <property type="match status" value="1"/>
</dbReference>
<dbReference type="PANTHER" id="PTHR14413">
    <property type="entry name" value="RIBOSOMAL PROTEIN L17"/>
    <property type="match status" value="1"/>
</dbReference>
<dbReference type="Pfam" id="PF01196">
    <property type="entry name" value="Ribosomal_L17"/>
    <property type="match status" value="1"/>
</dbReference>
<dbReference type="SUPFAM" id="SSF64263">
    <property type="entry name" value="Prokaryotic ribosomal protein L17"/>
    <property type="match status" value="1"/>
</dbReference>
<dbReference type="PROSITE" id="PS01167">
    <property type="entry name" value="RIBOSOMAL_L17"/>
    <property type="match status" value="1"/>
</dbReference>
<reference key="1">
    <citation type="journal article" date="2006" name="Genome Res.">
        <title>Skewed genomic variability in strains of the toxigenic bacterial pathogen, Clostridium perfringens.</title>
        <authorList>
            <person name="Myers G.S.A."/>
            <person name="Rasko D.A."/>
            <person name="Cheung J.K."/>
            <person name="Ravel J."/>
            <person name="Seshadri R."/>
            <person name="DeBoy R.T."/>
            <person name="Ren Q."/>
            <person name="Varga J."/>
            <person name="Awad M.M."/>
            <person name="Brinkac L.M."/>
            <person name="Daugherty S.C."/>
            <person name="Haft D.H."/>
            <person name="Dodson R.J."/>
            <person name="Madupu R."/>
            <person name="Nelson W.C."/>
            <person name="Rosovitz M.J."/>
            <person name="Sullivan S.A."/>
            <person name="Khouri H."/>
            <person name="Dimitrov G.I."/>
            <person name="Watkins K.L."/>
            <person name="Mulligan S."/>
            <person name="Benton J."/>
            <person name="Radune D."/>
            <person name="Fisher D.J."/>
            <person name="Atkins H.S."/>
            <person name="Hiscox T."/>
            <person name="Jost B.H."/>
            <person name="Billington S.J."/>
            <person name="Songer J.G."/>
            <person name="McClane B.A."/>
            <person name="Titball R.W."/>
            <person name="Rood J.I."/>
            <person name="Melville S.B."/>
            <person name="Paulsen I.T."/>
        </authorList>
    </citation>
    <scope>NUCLEOTIDE SEQUENCE [LARGE SCALE GENOMIC DNA]</scope>
    <source>
        <strain>ATCC 13124 / DSM 756 / JCM 1290 / NCIMB 6125 / NCTC 8237 / S 107 / Type A</strain>
    </source>
</reference>
<accession>Q0TMS6</accession>
<evidence type="ECO:0000255" key="1">
    <source>
        <dbReference type="HAMAP-Rule" id="MF_01368"/>
    </source>
</evidence>
<evidence type="ECO:0000305" key="2"/>
<protein>
    <recommendedName>
        <fullName evidence="1">Large ribosomal subunit protein bL17</fullName>
    </recommendedName>
    <alternativeName>
        <fullName evidence="2">50S ribosomal protein L17</fullName>
    </alternativeName>
</protein>
<keyword id="KW-0687">Ribonucleoprotein</keyword>
<keyword id="KW-0689">Ribosomal protein</keyword>
<comment type="subunit">
    <text evidence="1">Part of the 50S ribosomal subunit. Contacts protein L32.</text>
</comment>
<comment type="similarity">
    <text evidence="1">Belongs to the bacterial ribosomal protein bL17 family.</text>
</comment>
<proteinExistence type="inferred from homology"/>
<organism>
    <name type="scientific">Clostridium perfringens (strain ATCC 13124 / DSM 756 / JCM 1290 / NCIMB 6125 / NCTC 8237 / Type A)</name>
    <dbReference type="NCBI Taxonomy" id="195103"/>
    <lineage>
        <taxon>Bacteria</taxon>
        <taxon>Bacillati</taxon>
        <taxon>Bacillota</taxon>
        <taxon>Clostridia</taxon>
        <taxon>Eubacteriales</taxon>
        <taxon>Clostridiaceae</taxon>
        <taxon>Clostridium</taxon>
    </lineage>
</organism>
<gene>
    <name evidence="1" type="primary">rplQ</name>
    <name type="ordered locus">CPF_2684</name>
</gene>
<name>RL17_CLOP1</name>
<sequence length="113" mass="12877">MAGYRKLGRPTDQRKAMLRNLVTSFLKHGKIETTETRAKETRSLAEKMITLAKRGDLHARRQVLAFVTEEEVVKNLFDNIAPKYAERNGGYTRMYKVGPRRGDGAEVVILELV</sequence>